<accession>Q28DE7</accession>
<name>KLD10_XENTR</name>
<dbReference type="EMBL" id="CR855555">
    <property type="protein sequence ID" value="CAJ81314.1"/>
    <property type="status" value="ALT_INIT"/>
    <property type="molecule type" value="mRNA"/>
</dbReference>
<dbReference type="RefSeq" id="NP_001016816.1">
    <property type="nucleotide sequence ID" value="NM_001016816.2"/>
</dbReference>
<dbReference type="SMR" id="Q28DE7"/>
<dbReference type="FunCoup" id="Q28DE7">
    <property type="interactions" value="2462"/>
</dbReference>
<dbReference type="STRING" id="8364.ENSXETP00000054806"/>
<dbReference type="PaxDb" id="8364-ENSXETP00000035576"/>
<dbReference type="GeneID" id="549570"/>
<dbReference type="KEGG" id="xtr:549570"/>
<dbReference type="AGR" id="Xenbase:XB-GENE-1014477"/>
<dbReference type="CTD" id="23008"/>
<dbReference type="Xenbase" id="XB-GENE-1014477">
    <property type="gene designation" value="klhdc10"/>
</dbReference>
<dbReference type="eggNOG" id="KOG0379">
    <property type="taxonomic scope" value="Eukaryota"/>
</dbReference>
<dbReference type="HOGENOM" id="CLU_030914_0_0_1"/>
<dbReference type="InParanoid" id="Q28DE7"/>
<dbReference type="OMA" id="IHKHYLY"/>
<dbReference type="OrthoDB" id="7676067at2759"/>
<dbReference type="UniPathway" id="UPA00143"/>
<dbReference type="Proteomes" id="UP000008143">
    <property type="component" value="Chromosome 3"/>
</dbReference>
<dbReference type="Bgee" id="ENSXETG00000016301">
    <property type="expression patterns" value="Expressed in 4-cell stage embryo and 14 other cell types or tissues"/>
</dbReference>
<dbReference type="GO" id="GO:0016567">
    <property type="term" value="P:protein ubiquitination"/>
    <property type="evidence" value="ECO:0007669"/>
    <property type="project" value="UniProtKB-UniPathway"/>
</dbReference>
<dbReference type="GO" id="GO:0072344">
    <property type="term" value="P:rescue of stalled ribosome"/>
    <property type="evidence" value="ECO:0000250"/>
    <property type="project" value="UniProtKB"/>
</dbReference>
<dbReference type="FunFam" id="2.120.10.80:FF:000009">
    <property type="entry name" value="Kelch domain-containing protein 10"/>
    <property type="match status" value="1"/>
</dbReference>
<dbReference type="FunFam" id="2.120.10.80:FF:000010">
    <property type="entry name" value="kelch domain-containing protein 10"/>
    <property type="match status" value="1"/>
</dbReference>
<dbReference type="Gene3D" id="2.120.10.80">
    <property type="entry name" value="Kelch-type beta propeller"/>
    <property type="match status" value="2"/>
</dbReference>
<dbReference type="InterPro" id="IPR015915">
    <property type="entry name" value="Kelch-typ_b-propeller"/>
</dbReference>
<dbReference type="InterPro" id="IPR006652">
    <property type="entry name" value="Kelch_1"/>
</dbReference>
<dbReference type="InterPro" id="IPR052125">
    <property type="entry name" value="KLHDC10"/>
</dbReference>
<dbReference type="PANTHER" id="PTHR46428">
    <property type="entry name" value="KELCH DOMAIN-CONTAINING PROTEIN 10"/>
    <property type="match status" value="1"/>
</dbReference>
<dbReference type="PANTHER" id="PTHR46428:SF1">
    <property type="entry name" value="KELCH DOMAIN-CONTAINING PROTEIN 10"/>
    <property type="match status" value="1"/>
</dbReference>
<dbReference type="Pfam" id="PF13418">
    <property type="entry name" value="Kelch_4"/>
    <property type="match status" value="1"/>
</dbReference>
<dbReference type="Pfam" id="PF24681">
    <property type="entry name" value="Kelch_KLHDC2_KLHL20_DRC7"/>
    <property type="match status" value="1"/>
</dbReference>
<dbReference type="SMART" id="SM00612">
    <property type="entry name" value="Kelch"/>
    <property type="match status" value="2"/>
</dbReference>
<dbReference type="SUPFAM" id="SSF117281">
    <property type="entry name" value="Kelch motif"/>
    <property type="match status" value="1"/>
</dbReference>
<evidence type="ECO:0000250" key="1">
    <source>
        <dbReference type="UniProtKB" id="Q6PID8"/>
    </source>
</evidence>
<evidence type="ECO:0000303" key="2">
    <source ref="1"/>
</evidence>
<evidence type="ECO:0000305" key="3"/>
<feature type="chain" id="PRO_0000319440" description="Kelch domain-containing protein 10">
    <location>
        <begin position="1"/>
        <end position="411"/>
    </location>
</feature>
<feature type="repeat" description="Kelch 1">
    <location>
        <begin position="72"/>
        <end position="133"/>
    </location>
</feature>
<feature type="repeat" description="Kelch 2">
    <location>
        <begin position="135"/>
        <end position="186"/>
    </location>
</feature>
<feature type="repeat" description="Kelch 3">
    <location>
        <begin position="187"/>
        <end position="239"/>
    </location>
</feature>
<feature type="repeat" description="Kelch 4">
    <location>
        <begin position="240"/>
        <end position="288"/>
    </location>
</feature>
<feature type="repeat" description="Kelch 5">
    <location>
        <begin position="296"/>
        <end position="342"/>
    </location>
</feature>
<feature type="repeat" description="Kelch 6">
    <location>
        <begin position="345"/>
        <end position="388"/>
    </location>
</feature>
<keyword id="KW-0880">Kelch repeat</keyword>
<keyword id="KW-1185">Reference proteome</keyword>
<keyword id="KW-0677">Repeat</keyword>
<keyword id="KW-0833">Ubl conjugation pathway</keyword>
<organism>
    <name type="scientific">Xenopus tropicalis</name>
    <name type="common">Western clawed frog</name>
    <name type="synonym">Silurana tropicalis</name>
    <dbReference type="NCBI Taxonomy" id="8364"/>
    <lineage>
        <taxon>Eukaryota</taxon>
        <taxon>Metazoa</taxon>
        <taxon>Chordata</taxon>
        <taxon>Craniata</taxon>
        <taxon>Vertebrata</taxon>
        <taxon>Euteleostomi</taxon>
        <taxon>Amphibia</taxon>
        <taxon>Batrachia</taxon>
        <taxon>Anura</taxon>
        <taxon>Pipoidea</taxon>
        <taxon>Pipidae</taxon>
        <taxon>Xenopodinae</taxon>
        <taxon>Xenopus</taxon>
        <taxon>Silurana</taxon>
    </lineage>
</organism>
<proteinExistence type="evidence at transcript level"/>
<reference key="1">
    <citation type="submission" date="2006-10" db="EMBL/GenBank/DDBJ databases">
        <authorList>
            <consortium name="Sanger Xenopus tropicalis EST/cDNA project"/>
        </authorList>
    </citation>
    <scope>NUCLEOTIDE SEQUENCE [LARGE SCALE MRNA]</scope>
    <source>
        <tissue>Egg</tissue>
    </source>
</reference>
<gene>
    <name evidence="1" type="primary">klhdc10</name>
    <name evidence="2" type="ORF">TEgg142i20.1</name>
</gene>
<sequence length="411" mass="46737">MAAEAGGGEPLVKFVKLSGRAAGSKKKVRWFPVRRLFTHSCPSLRIPSRFLREGRRSPPARSGHRCVADNTNLYVFGGYNPDYDESGGPENEDYPLFRELWRYHFATGMWHQMGTDGHMPRELASMSLVLHGHNLLVFGGTGIPFGESNGNDVYVCNVKYKRWSKLNCRGKKPNRIYGQAMAIIHGFLYVFGGTTGYIYSTDLHRLDLSTREWIQLKPNNPPCDLPEERYRHEIAHDGQRIYVLGGGTSWTAYSLEKIHAYNFETNTWEDIPTKPYGNLGFPAARRCHSCVQIKNEVFICGGYNGLVILGDLWKLDLQTFQWTKLPALMPEPAYFHCAAVTPAGCMYIHGGVVNIQQNKRTGSLFKIWLVVPSLLELCWENLLKYFPHLCQLPTHQLLQLGLSQELIERLK</sequence>
<protein>
    <recommendedName>
        <fullName evidence="3">Kelch domain-containing protein 10</fullName>
    </recommendedName>
</protein>
<comment type="function">
    <text evidence="1">Substrate-recognition component of a Cul2-RING (CRL2) E3 ubiquitin-protein ligase complex of the DesCEND (destruction via C-end degrons) pathway, which recognizes a C-degron located at the extreme C terminus of target proteins, leading to their ubiquitination and degradation. The C-degron recognized by the DesCEND pathway is usually a motif of less than ten residues and can be present in full-length proteins, truncated proteins or proteolytically cleaved forms. The CRL2(KLHDC10) complex specifically recognizes proteins with a proline-glycine (Pro-Gly) or an alanine tail (CAT tail) at the C-terminus, leading to their ubiquitination and degradation. The CRL2(KLHDC10) complex is involved in the ribosome-associated quality control (RQC) pathway, which mediates the extraction of incompletely synthesized nascent chains from stalled ribosomes: CRL2(KLHDC10) acts downstream of NEMF and recognizes CAT tails associated with stalled nascent chains, leading to their ubiquitination and degradation.</text>
</comment>
<comment type="pathway">
    <text evidence="1">Protein modification; protein ubiquitination.</text>
</comment>
<comment type="subunit">
    <text evidence="1">Component of a CRL2 E3 ubiquitin-protein ligase complex, also named ECS (Elongin BC-CUL2/5-SOCS-box protein) complex, composed of CUL2, Elongin BC (ELOB and ELOC), RBX1 and substrate-specific adapter KLHDC10.</text>
</comment>
<comment type="similarity">
    <text evidence="3">Belongs to the KLHDC10 family.</text>
</comment>
<comment type="sequence caution" evidence="3">
    <conflict type="erroneous initiation">
        <sequence resource="EMBL-CDS" id="CAJ81314"/>
    </conflict>
    <text>Extended N-terminus.</text>
</comment>